<accession>C4ZY91</accession>
<name>RSXB_ECOBW</name>
<sequence length="192" mass="20544">MNAIWIAVAAVSLLGLAFGAILGYASRRFAVEDDPVVEKIDEILPQSQCGQCGYPGCRPYAEAISCNGEKINRCAPGGEAVMLKIAELLNVEPQPLDGEAQEITPARMVAVIDENNCIGCTKCIQACPVDAIVGATRAMHTVMSDLCTGCNLCVDPCPTHCISLQPVAETPDSWKWDLNTIPVRIIPVEHHA</sequence>
<proteinExistence type="inferred from homology"/>
<feature type="chain" id="PRO_1000206298" description="Ion-translocating oxidoreductase complex subunit B">
    <location>
        <begin position="1"/>
        <end position="192"/>
    </location>
</feature>
<feature type="domain" description="4Fe-4S" evidence="1">
    <location>
        <begin position="32"/>
        <end position="91"/>
    </location>
</feature>
<feature type="domain" description="4Fe-4S ferredoxin-type 1" evidence="1">
    <location>
        <begin position="108"/>
        <end position="137"/>
    </location>
</feature>
<feature type="domain" description="4Fe-4S ferredoxin-type 2" evidence="1">
    <location>
        <begin position="138"/>
        <end position="167"/>
    </location>
</feature>
<feature type="region of interest" description="Hydrophobic" evidence="1">
    <location>
        <begin position="1"/>
        <end position="26"/>
    </location>
</feature>
<feature type="binding site" evidence="1">
    <location>
        <position position="49"/>
    </location>
    <ligand>
        <name>[4Fe-4S] cluster</name>
        <dbReference type="ChEBI" id="CHEBI:49883"/>
        <label>1</label>
    </ligand>
</feature>
<feature type="binding site" evidence="1">
    <location>
        <position position="52"/>
    </location>
    <ligand>
        <name>[4Fe-4S] cluster</name>
        <dbReference type="ChEBI" id="CHEBI:49883"/>
        <label>1</label>
    </ligand>
</feature>
<feature type="binding site" evidence="1">
    <location>
        <position position="57"/>
    </location>
    <ligand>
        <name>[4Fe-4S] cluster</name>
        <dbReference type="ChEBI" id="CHEBI:49883"/>
        <label>1</label>
    </ligand>
</feature>
<feature type="binding site" evidence="1">
    <location>
        <position position="74"/>
    </location>
    <ligand>
        <name>[4Fe-4S] cluster</name>
        <dbReference type="ChEBI" id="CHEBI:49883"/>
        <label>1</label>
    </ligand>
</feature>
<feature type="binding site" evidence="1">
    <location>
        <position position="117"/>
    </location>
    <ligand>
        <name>[4Fe-4S] cluster</name>
        <dbReference type="ChEBI" id="CHEBI:49883"/>
        <label>2</label>
    </ligand>
</feature>
<feature type="binding site" evidence="1">
    <location>
        <position position="120"/>
    </location>
    <ligand>
        <name>[4Fe-4S] cluster</name>
        <dbReference type="ChEBI" id="CHEBI:49883"/>
        <label>2</label>
    </ligand>
</feature>
<feature type="binding site" evidence="1">
    <location>
        <position position="123"/>
    </location>
    <ligand>
        <name>[4Fe-4S] cluster</name>
        <dbReference type="ChEBI" id="CHEBI:49883"/>
        <label>2</label>
    </ligand>
</feature>
<feature type="binding site" evidence="1">
    <location>
        <position position="127"/>
    </location>
    <ligand>
        <name>[4Fe-4S] cluster</name>
        <dbReference type="ChEBI" id="CHEBI:49883"/>
        <label>3</label>
    </ligand>
</feature>
<feature type="binding site" evidence="1">
    <location>
        <position position="147"/>
    </location>
    <ligand>
        <name>[4Fe-4S] cluster</name>
        <dbReference type="ChEBI" id="CHEBI:49883"/>
        <label>3</label>
    </ligand>
</feature>
<feature type="binding site" evidence="1">
    <location>
        <position position="150"/>
    </location>
    <ligand>
        <name>[4Fe-4S] cluster</name>
        <dbReference type="ChEBI" id="CHEBI:49883"/>
        <label>3</label>
    </ligand>
</feature>
<feature type="binding site" evidence="1">
    <location>
        <position position="153"/>
    </location>
    <ligand>
        <name>[4Fe-4S] cluster</name>
        <dbReference type="ChEBI" id="CHEBI:49883"/>
        <label>3</label>
    </ligand>
</feature>
<feature type="binding site" evidence="1">
    <location>
        <position position="157"/>
    </location>
    <ligand>
        <name>[4Fe-4S] cluster</name>
        <dbReference type="ChEBI" id="CHEBI:49883"/>
        <label>2</label>
    </ligand>
</feature>
<protein>
    <recommendedName>
        <fullName evidence="1">Ion-translocating oxidoreductase complex subunit B</fullName>
        <ecNumber evidence="1">7.-.-.-</ecNumber>
    </recommendedName>
    <alternativeName>
        <fullName evidence="1">Rsx electron transport complex subunit B</fullName>
    </alternativeName>
</protein>
<keyword id="KW-0004">4Fe-4S</keyword>
<keyword id="KW-0997">Cell inner membrane</keyword>
<keyword id="KW-1003">Cell membrane</keyword>
<keyword id="KW-0249">Electron transport</keyword>
<keyword id="KW-0408">Iron</keyword>
<keyword id="KW-0411">Iron-sulfur</keyword>
<keyword id="KW-0472">Membrane</keyword>
<keyword id="KW-0479">Metal-binding</keyword>
<keyword id="KW-0677">Repeat</keyword>
<keyword id="KW-1278">Translocase</keyword>
<keyword id="KW-0813">Transport</keyword>
<dbReference type="EC" id="7.-.-.-" evidence="1"/>
<dbReference type="EMBL" id="CP001396">
    <property type="protein sequence ID" value="ACR64597.1"/>
    <property type="molecule type" value="Genomic_DNA"/>
</dbReference>
<dbReference type="RefSeq" id="WP_000991805.1">
    <property type="nucleotide sequence ID" value="NC_012759.1"/>
</dbReference>
<dbReference type="KEGG" id="ebw:BWG_1443"/>
<dbReference type="HOGENOM" id="CLU_063448_2_0_6"/>
<dbReference type="GO" id="GO:0005886">
    <property type="term" value="C:plasma membrane"/>
    <property type="evidence" value="ECO:0007669"/>
    <property type="project" value="UniProtKB-SubCell"/>
</dbReference>
<dbReference type="GO" id="GO:0051539">
    <property type="term" value="F:4 iron, 4 sulfur cluster binding"/>
    <property type="evidence" value="ECO:0007669"/>
    <property type="project" value="UniProtKB-UniRule"/>
</dbReference>
<dbReference type="GO" id="GO:0009055">
    <property type="term" value="F:electron transfer activity"/>
    <property type="evidence" value="ECO:0007669"/>
    <property type="project" value="InterPro"/>
</dbReference>
<dbReference type="GO" id="GO:0046872">
    <property type="term" value="F:metal ion binding"/>
    <property type="evidence" value="ECO:0007669"/>
    <property type="project" value="UniProtKB-KW"/>
</dbReference>
<dbReference type="GO" id="GO:0022900">
    <property type="term" value="P:electron transport chain"/>
    <property type="evidence" value="ECO:0007669"/>
    <property type="project" value="UniProtKB-UniRule"/>
</dbReference>
<dbReference type="FunFam" id="1.10.15.40:FF:000001">
    <property type="entry name" value="Ion-translocating oxidoreductase complex subunit B"/>
    <property type="match status" value="1"/>
</dbReference>
<dbReference type="Gene3D" id="3.30.70.20">
    <property type="match status" value="1"/>
</dbReference>
<dbReference type="Gene3D" id="1.10.15.40">
    <property type="entry name" value="Electron transport complex subunit B, putative Fe-S cluster"/>
    <property type="match status" value="1"/>
</dbReference>
<dbReference type="HAMAP" id="MF_00463">
    <property type="entry name" value="RsxB_RnfB"/>
    <property type="match status" value="1"/>
</dbReference>
<dbReference type="InterPro" id="IPR007202">
    <property type="entry name" value="4Fe-4S_dom"/>
</dbReference>
<dbReference type="InterPro" id="IPR017896">
    <property type="entry name" value="4Fe4S_Fe-S-bd"/>
</dbReference>
<dbReference type="InterPro" id="IPR017900">
    <property type="entry name" value="4Fe4S_Fe_S_CS"/>
</dbReference>
<dbReference type="InterPro" id="IPR050395">
    <property type="entry name" value="4Fe4S_Ferredoxin_RnfB"/>
</dbReference>
<dbReference type="InterPro" id="IPR010207">
    <property type="entry name" value="Elect_transpt_cplx_RnfB/RsxB"/>
</dbReference>
<dbReference type="InterPro" id="IPR016463">
    <property type="entry name" value="RnfB/RsxB_Proteobac"/>
</dbReference>
<dbReference type="NCBIfam" id="NF003475">
    <property type="entry name" value="PRK05113.1"/>
    <property type="match status" value="1"/>
</dbReference>
<dbReference type="NCBIfam" id="TIGR01944">
    <property type="entry name" value="rnfB"/>
    <property type="match status" value="1"/>
</dbReference>
<dbReference type="PANTHER" id="PTHR43560">
    <property type="entry name" value="ION-TRANSLOCATING OXIDOREDUCTASE COMPLEX SUBUNIT B"/>
    <property type="match status" value="1"/>
</dbReference>
<dbReference type="PANTHER" id="PTHR43560:SF1">
    <property type="entry name" value="ION-TRANSLOCATING OXIDOREDUCTASE COMPLEX SUBUNIT B"/>
    <property type="match status" value="1"/>
</dbReference>
<dbReference type="Pfam" id="PF14697">
    <property type="entry name" value="Fer4_21"/>
    <property type="match status" value="1"/>
</dbReference>
<dbReference type="Pfam" id="PF04060">
    <property type="entry name" value="FeS"/>
    <property type="match status" value="1"/>
</dbReference>
<dbReference type="PIRSF" id="PIRSF005784">
    <property type="entry name" value="Elect_transpt_RnfB"/>
    <property type="match status" value="1"/>
</dbReference>
<dbReference type="SUPFAM" id="SSF54862">
    <property type="entry name" value="4Fe-4S ferredoxins"/>
    <property type="match status" value="1"/>
</dbReference>
<dbReference type="PROSITE" id="PS51656">
    <property type="entry name" value="4FE4S"/>
    <property type="match status" value="1"/>
</dbReference>
<dbReference type="PROSITE" id="PS00198">
    <property type="entry name" value="4FE4S_FER_1"/>
    <property type="match status" value="2"/>
</dbReference>
<dbReference type="PROSITE" id="PS51379">
    <property type="entry name" value="4FE4S_FER_2"/>
    <property type="match status" value="2"/>
</dbReference>
<comment type="function">
    <text evidence="1">Part of a membrane-bound complex that couples electron transfer with translocation of ions across the membrane. Required to maintain the reduced state of SoxR.</text>
</comment>
<comment type="cofactor">
    <cofactor evidence="1">
        <name>[4Fe-4S] cluster</name>
        <dbReference type="ChEBI" id="CHEBI:49883"/>
    </cofactor>
    <text evidence="1">Binds 3 [4Fe-4S] clusters.</text>
</comment>
<comment type="subunit">
    <text evidence="1">The complex is composed of six subunits: RsxA, RsxB, RsxC, RsxD, RsxE and RsxG.</text>
</comment>
<comment type="subcellular location">
    <subcellularLocation>
        <location evidence="1">Cell inner membrane</location>
    </subcellularLocation>
</comment>
<comment type="similarity">
    <text evidence="1">Belongs to the 4Fe4S bacterial-type ferredoxin family. RnfB subfamily.</text>
</comment>
<organism>
    <name type="scientific">Escherichia coli (strain K12 / MC4100 / BW2952)</name>
    <dbReference type="NCBI Taxonomy" id="595496"/>
    <lineage>
        <taxon>Bacteria</taxon>
        <taxon>Pseudomonadati</taxon>
        <taxon>Pseudomonadota</taxon>
        <taxon>Gammaproteobacteria</taxon>
        <taxon>Enterobacterales</taxon>
        <taxon>Enterobacteriaceae</taxon>
        <taxon>Escherichia</taxon>
    </lineage>
</organism>
<gene>
    <name evidence="1" type="primary">rsxB</name>
    <name type="ordered locus">BWG_1443</name>
</gene>
<evidence type="ECO:0000255" key="1">
    <source>
        <dbReference type="HAMAP-Rule" id="MF_00463"/>
    </source>
</evidence>
<reference key="1">
    <citation type="journal article" date="2009" name="J. Bacteriol.">
        <title>Genomic sequencing reveals regulatory mutations and recombinational events in the widely used MC4100 lineage of Escherichia coli K-12.</title>
        <authorList>
            <person name="Ferenci T."/>
            <person name="Zhou Z."/>
            <person name="Betteridge T."/>
            <person name="Ren Y."/>
            <person name="Liu Y."/>
            <person name="Feng L."/>
            <person name="Reeves P.R."/>
            <person name="Wang L."/>
        </authorList>
    </citation>
    <scope>NUCLEOTIDE SEQUENCE [LARGE SCALE GENOMIC DNA]</scope>
    <source>
        <strain>K12 / MC4100 / BW2952</strain>
    </source>
</reference>